<feature type="transit peptide" description="Mitochondrion" evidence="1">
    <location>
        <begin position="1"/>
        <end position="19"/>
    </location>
</feature>
<feature type="chain" id="PRO_0000314127" description="Methionine aminopeptidase 1D, mitochondrial">
    <location>
        <begin position="20"/>
        <end position="335"/>
    </location>
</feature>
<feature type="binding site" evidence="1">
    <location>
        <position position="161"/>
    </location>
    <ligand>
        <name>substrate</name>
    </ligand>
</feature>
<feature type="binding site" evidence="1">
    <location>
        <position position="178"/>
    </location>
    <ligand>
        <name>a divalent metal cation</name>
        <dbReference type="ChEBI" id="CHEBI:60240"/>
        <label>1</label>
    </ligand>
</feature>
<feature type="binding site" evidence="1">
    <location>
        <position position="189"/>
    </location>
    <ligand>
        <name>a divalent metal cation</name>
        <dbReference type="ChEBI" id="CHEBI:60240"/>
        <label>1</label>
    </ligand>
</feature>
<feature type="binding site" evidence="1">
    <location>
        <position position="189"/>
    </location>
    <ligand>
        <name>a divalent metal cation</name>
        <dbReference type="ChEBI" id="CHEBI:60240"/>
        <label>2</label>
        <note>catalytic</note>
    </ligand>
</feature>
<feature type="binding site" evidence="1">
    <location>
        <position position="252"/>
    </location>
    <ligand>
        <name>a divalent metal cation</name>
        <dbReference type="ChEBI" id="CHEBI:60240"/>
        <label>2</label>
        <note>catalytic</note>
    </ligand>
</feature>
<feature type="binding site" evidence="1">
    <location>
        <position position="259"/>
    </location>
    <ligand>
        <name>substrate</name>
    </ligand>
</feature>
<feature type="binding site" evidence="1">
    <location>
        <position position="284"/>
    </location>
    <ligand>
        <name>a divalent metal cation</name>
        <dbReference type="ChEBI" id="CHEBI:60240"/>
        <label>2</label>
        <note>catalytic</note>
    </ligand>
</feature>
<feature type="binding site" evidence="1">
    <location>
        <position position="315"/>
    </location>
    <ligand>
        <name>a divalent metal cation</name>
        <dbReference type="ChEBI" id="CHEBI:60240"/>
        <label>1</label>
    </ligand>
</feature>
<feature type="binding site" evidence="1">
    <location>
        <position position="315"/>
    </location>
    <ligand>
        <name>a divalent metal cation</name>
        <dbReference type="ChEBI" id="CHEBI:60240"/>
        <label>2</label>
        <note>catalytic</note>
    </ligand>
</feature>
<feature type="splice variant" id="VSP_030210" description="In isoform 2." evidence="2 3">
    <location>
        <begin position="1"/>
        <end position="118"/>
    </location>
</feature>
<feature type="sequence conflict" description="In Ref. 1; CAC88860." evidence="4" ref="1">
    <original>N</original>
    <variation>T</variation>
    <location>
        <position position="232"/>
    </location>
</feature>
<comment type="function">
    <text evidence="1">Removes the N-terminal methionine from nascent proteins. The N-terminal methionine is often cleaved when the second residue in the primary sequence is small and uncharged (Met-Ala-, Cys, Gly, Pro, Ser, Thr, or Val). Requires deformylation of the N(alpha)-formylated initiator methionine before it can be hydrolyzed.</text>
</comment>
<comment type="catalytic activity">
    <reaction evidence="1">
        <text>Release of N-terminal amino acids, preferentially methionine, from peptides and arylamides.</text>
        <dbReference type="EC" id="3.4.11.18"/>
    </reaction>
</comment>
<comment type="cofactor">
    <cofactor evidence="1">
        <name>Co(2+)</name>
        <dbReference type="ChEBI" id="CHEBI:48828"/>
    </cofactor>
    <cofactor evidence="1">
        <name>Zn(2+)</name>
        <dbReference type="ChEBI" id="CHEBI:29105"/>
    </cofactor>
    <cofactor evidence="1">
        <name>Mn(2+)</name>
        <dbReference type="ChEBI" id="CHEBI:29035"/>
    </cofactor>
    <cofactor evidence="1">
        <name>Fe(2+)</name>
        <dbReference type="ChEBI" id="CHEBI:29033"/>
    </cofactor>
    <text evidence="1">Binds 2 divalent metal cations per subunit. Has a high-affinity and a low affinity metal-binding site. The true nature of the physiological cofactor is under debate. The enzyme is active with cobalt, zinc, manganese or divalent iron ions. Most likely, methionine aminopeptidases function as mononuclear Fe(2+)-metalloproteases under physiological conditions, and the catalytically relevant metal-binding site has been assigned to the histidine-containing high-affinity site.</text>
</comment>
<comment type="subcellular location">
    <subcellularLocation>
        <location evidence="1">Mitochondrion</location>
    </subcellularLocation>
</comment>
<comment type="alternative products">
    <event type="alternative splicing"/>
    <isoform>
        <id>Q9CPW9-1</id>
        <name>1</name>
        <sequence type="displayed"/>
    </isoform>
    <isoform>
        <id>Q9CPW9-2</id>
        <name>2</name>
        <sequence type="described" ref="VSP_030210"/>
    </isoform>
</comment>
<comment type="similarity">
    <text evidence="1">Belongs to the peptidase M24A family. Methionine aminopeptidase type 1 subfamily.</text>
</comment>
<reference key="1">
    <citation type="submission" date="2001-09" db="EMBL/GenBank/DDBJ databases">
        <title>Cloning, sequencing and expression of mouse MNPEPL peptidase, a novel member of peptidase family M24.</title>
        <authorList>
            <person name="Dando P.M."/>
            <person name="Fortunato M."/>
            <person name="Rawlings N.D."/>
            <person name="Barrett A.J."/>
        </authorList>
    </citation>
    <scope>NUCLEOTIDE SEQUENCE [MRNA] (ISOFORM 2)</scope>
    <source>
        <strain>C57BL/6J</strain>
        <tissue>Spleen</tissue>
    </source>
</reference>
<reference key="2">
    <citation type="journal article" date="2005" name="Science">
        <title>The transcriptional landscape of the mammalian genome.</title>
        <authorList>
            <person name="Carninci P."/>
            <person name="Kasukawa T."/>
            <person name="Katayama S."/>
            <person name="Gough J."/>
            <person name="Frith M.C."/>
            <person name="Maeda N."/>
            <person name="Oyama R."/>
            <person name="Ravasi T."/>
            <person name="Lenhard B."/>
            <person name="Wells C."/>
            <person name="Kodzius R."/>
            <person name="Shimokawa K."/>
            <person name="Bajic V.B."/>
            <person name="Brenner S.E."/>
            <person name="Batalov S."/>
            <person name="Forrest A.R."/>
            <person name="Zavolan M."/>
            <person name="Davis M.J."/>
            <person name="Wilming L.G."/>
            <person name="Aidinis V."/>
            <person name="Allen J.E."/>
            <person name="Ambesi-Impiombato A."/>
            <person name="Apweiler R."/>
            <person name="Aturaliya R.N."/>
            <person name="Bailey T.L."/>
            <person name="Bansal M."/>
            <person name="Baxter L."/>
            <person name="Beisel K.W."/>
            <person name="Bersano T."/>
            <person name="Bono H."/>
            <person name="Chalk A.M."/>
            <person name="Chiu K.P."/>
            <person name="Choudhary V."/>
            <person name="Christoffels A."/>
            <person name="Clutterbuck D.R."/>
            <person name="Crowe M.L."/>
            <person name="Dalla E."/>
            <person name="Dalrymple B.P."/>
            <person name="de Bono B."/>
            <person name="Della Gatta G."/>
            <person name="di Bernardo D."/>
            <person name="Down T."/>
            <person name="Engstrom P."/>
            <person name="Fagiolini M."/>
            <person name="Faulkner G."/>
            <person name="Fletcher C.F."/>
            <person name="Fukushima T."/>
            <person name="Furuno M."/>
            <person name="Futaki S."/>
            <person name="Gariboldi M."/>
            <person name="Georgii-Hemming P."/>
            <person name="Gingeras T.R."/>
            <person name="Gojobori T."/>
            <person name="Green R.E."/>
            <person name="Gustincich S."/>
            <person name="Harbers M."/>
            <person name="Hayashi Y."/>
            <person name="Hensch T.K."/>
            <person name="Hirokawa N."/>
            <person name="Hill D."/>
            <person name="Huminiecki L."/>
            <person name="Iacono M."/>
            <person name="Ikeo K."/>
            <person name="Iwama A."/>
            <person name="Ishikawa T."/>
            <person name="Jakt M."/>
            <person name="Kanapin A."/>
            <person name="Katoh M."/>
            <person name="Kawasawa Y."/>
            <person name="Kelso J."/>
            <person name="Kitamura H."/>
            <person name="Kitano H."/>
            <person name="Kollias G."/>
            <person name="Krishnan S.P."/>
            <person name="Kruger A."/>
            <person name="Kummerfeld S.K."/>
            <person name="Kurochkin I.V."/>
            <person name="Lareau L.F."/>
            <person name="Lazarevic D."/>
            <person name="Lipovich L."/>
            <person name="Liu J."/>
            <person name="Liuni S."/>
            <person name="McWilliam S."/>
            <person name="Madan Babu M."/>
            <person name="Madera M."/>
            <person name="Marchionni L."/>
            <person name="Matsuda H."/>
            <person name="Matsuzawa S."/>
            <person name="Miki H."/>
            <person name="Mignone F."/>
            <person name="Miyake S."/>
            <person name="Morris K."/>
            <person name="Mottagui-Tabar S."/>
            <person name="Mulder N."/>
            <person name="Nakano N."/>
            <person name="Nakauchi H."/>
            <person name="Ng P."/>
            <person name="Nilsson R."/>
            <person name="Nishiguchi S."/>
            <person name="Nishikawa S."/>
            <person name="Nori F."/>
            <person name="Ohara O."/>
            <person name="Okazaki Y."/>
            <person name="Orlando V."/>
            <person name="Pang K.C."/>
            <person name="Pavan W.J."/>
            <person name="Pavesi G."/>
            <person name="Pesole G."/>
            <person name="Petrovsky N."/>
            <person name="Piazza S."/>
            <person name="Reed J."/>
            <person name="Reid J.F."/>
            <person name="Ring B.Z."/>
            <person name="Ringwald M."/>
            <person name="Rost B."/>
            <person name="Ruan Y."/>
            <person name="Salzberg S.L."/>
            <person name="Sandelin A."/>
            <person name="Schneider C."/>
            <person name="Schoenbach C."/>
            <person name="Sekiguchi K."/>
            <person name="Semple C.A."/>
            <person name="Seno S."/>
            <person name="Sessa L."/>
            <person name="Sheng Y."/>
            <person name="Shibata Y."/>
            <person name="Shimada H."/>
            <person name="Shimada K."/>
            <person name="Silva D."/>
            <person name="Sinclair B."/>
            <person name="Sperling S."/>
            <person name="Stupka E."/>
            <person name="Sugiura K."/>
            <person name="Sultana R."/>
            <person name="Takenaka Y."/>
            <person name="Taki K."/>
            <person name="Tammoja K."/>
            <person name="Tan S.L."/>
            <person name="Tang S."/>
            <person name="Taylor M.S."/>
            <person name="Tegner J."/>
            <person name="Teichmann S.A."/>
            <person name="Ueda H.R."/>
            <person name="van Nimwegen E."/>
            <person name="Verardo R."/>
            <person name="Wei C.L."/>
            <person name="Yagi K."/>
            <person name="Yamanishi H."/>
            <person name="Zabarovsky E."/>
            <person name="Zhu S."/>
            <person name="Zimmer A."/>
            <person name="Hide W."/>
            <person name="Bult C."/>
            <person name="Grimmond S.M."/>
            <person name="Teasdale R.D."/>
            <person name="Liu E.T."/>
            <person name="Brusic V."/>
            <person name="Quackenbush J."/>
            <person name="Wahlestedt C."/>
            <person name="Mattick J.S."/>
            <person name="Hume D.A."/>
            <person name="Kai C."/>
            <person name="Sasaki D."/>
            <person name="Tomaru Y."/>
            <person name="Fukuda S."/>
            <person name="Kanamori-Katayama M."/>
            <person name="Suzuki M."/>
            <person name="Aoki J."/>
            <person name="Arakawa T."/>
            <person name="Iida J."/>
            <person name="Imamura K."/>
            <person name="Itoh M."/>
            <person name="Kato T."/>
            <person name="Kawaji H."/>
            <person name="Kawagashira N."/>
            <person name="Kawashima T."/>
            <person name="Kojima M."/>
            <person name="Kondo S."/>
            <person name="Konno H."/>
            <person name="Nakano K."/>
            <person name="Ninomiya N."/>
            <person name="Nishio T."/>
            <person name="Okada M."/>
            <person name="Plessy C."/>
            <person name="Shibata K."/>
            <person name="Shiraki T."/>
            <person name="Suzuki S."/>
            <person name="Tagami M."/>
            <person name="Waki K."/>
            <person name="Watahiki A."/>
            <person name="Okamura-Oho Y."/>
            <person name="Suzuki H."/>
            <person name="Kawai J."/>
            <person name="Hayashizaki Y."/>
        </authorList>
    </citation>
    <scope>NUCLEOTIDE SEQUENCE [LARGE SCALE MRNA] (ISOFORM 1)</scope>
    <source>
        <strain>C57BL/6J</strain>
        <tissue>Cerebellum</tissue>
        <tissue>Tongue</tissue>
    </source>
</reference>
<reference key="3">
    <citation type="journal article" date="2009" name="PLoS Biol.">
        <title>Lineage-specific biology revealed by a finished genome assembly of the mouse.</title>
        <authorList>
            <person name="Church D.M."/>
            <person name="Goodstadt L."/>
            <person name="Hillier L.W."/>
            <person name="Zody M.C."/>
            <person name="Goldstein S."/>
            <person name="She X."/>
            <person name="Bult C.J."/>
            <person name="Agarwala R."/>
            <person name="Cherry J.L."/>
            <person name="DiCuccio M."/>
            <person name="Hlavina W."/>
            <person name="Kapustin Y."/>
            <person name="Meric P."/>
            <person name="Maglott D."/>
            <person name="Birtle Z."/>
            <person name="Marques A.C."/>
            <person name="Graves T."/>
            <person name="Zhou S."/>
            <person name="Teague B."/>
            <person name="Potamousis K."/>
            <person name="Churas C."/>
            <person name="Place M."/>
            <person name="Herschleb J."/>
            <person name="Runnheim R."/>
            <person name="Forrest D."/>
            <person name="Amos-Landgraf J."/>
            <person name="Schwartz D.C."/>
            <person name="Cheng Z."/>
            <person name="Lindblad-Toh K."/>
            <person name="Eichler E.E."/>
            <person name="Ponting C.P."/>
        </authorList>
    </citation>
    <scope>NUCLEOTIDE SEQUENCE [LARGE SCALE GENOMIC DNA]</scope>
    <source>
        <strain>C57BL/6J</strain>
    </source>
</reference>
<reference key="4">
    <citation type="journal article" date="2004" name="Genome Res.">
        <title>The status, quality, and expansion of the NIH full-length cDNA project: the Mammalian Gene Collection (MGC).</title>
        <authorList>
            <consortium name="The MGC Project Team"/>
        </authorList>
    </citation>
    <scope>NUCLEOTIDE SEQUENCE [LARGE SCALE MRNA] (ISOFORM 2)</scope>
    <source>
        <tissue>Mammary gland</tissue>
    </source>
</reference>
<proteinExistence type="evidence at transcript level"/>
<gene>
    <name type="primary">Metap1d</name>
    <name type="synonym">Map1d</name>
    <name type="synonym">Metapl1</name>
    <name type="synonym">Mnpepl</name>
</gene>
<organism>
    <name type="scientific">Mus musculus</name>
    <name type="common">Mouse</name>
    <dbReference type="NCBI Taxonomy" id="10090"/>
    <lineage>
        <taxon>Eukaryota</taxon>
        <taxon>Metazoa</taxon>
        <taxon>Chordata</taxon>
        <taxon>Craniata</taxon>
        <taxon>Vertebrata</taxon>
        <taxon>Euteleostomi</taxon>
        <taxon>Mammalia</taxon>
        <taxon>Eutheria</taxon>
        <taxon>Euarchontoglires</taxon>
        <taxon>Glires</taxon>
        <taxon>Rodentia</taxon>
        <taxon>Myomorpha</taxon>
        <taxon>Muroidea</taxon>
        <taxon>Muridae</taxon>
        <taxon>Murinae</taxon>
        <taxon>Mus</taxon>
        <taxon>Mus</taxon>
    </lineage>
</organism>
<name>MAP12_MOUSE</name>
<sequence length="335" mass="37262">MAAPIGVPLLVRGGCQRILSSPLNHIYLHKRSGSQQRRHFFFWRQRDISHSVVSPAAVSPAHPVPKRIKKPDYVTTGIVPDWGDSIEVKDEDQIQGLREACRLARHVLLLAGKSLKVDMTTEEIDALVHWEIIRHDAYPSPLGYGRFPKSVCTSVNNVLCHGIPDSRPLQDGDIINIDVTVYYNGYHGDTSETFLVGNVDESGKKLVEVARRCRDEAIAACRAGAPFSVIGNTISRITHQNGLQVCPHFVGHGIGSYFHGHPEIWHHANDNDLPMEEGMAFTIEPIITEGSPEFKVLEDAWTVVSLDNQRSAQFEHTVLITPRGVEILTKLPQEA</sequence>
<keyword id="KW-0025">Alternative splicing</keyword>
<keyword id="KW-0031">Aminopeptidase</keyword>
<keyword id="KW-0378">Hydrolase</keyword>
<keyword id="KW-0479">Metal-binding</keyword>
<keyword id="KW-0496">Mitochondrion</keyword>
<keyword id="KW-0645">Protease</keyword>
<keyword id="KW-1185">Reference proteome</keyword>
<keyword id="KW-0809">Transit peptide</keyword>
<accession>Q9CPW9</accession>
<accession>Q80WB3</accession>
<accession>Q91YD2</accession>
<evidence type="ECO:0000255" key="1">
    <source>
        <dbReference type="HAMAP-Rule" id="MF_03174"/>
    </source>
</evidence>
<evidence type="ECO:0000303" key="2">
    <source>
    </source>
</evidence>
<evidence type="ECO:0000303" key="3">
    <source ref="1"/>
</evidence>
<evidence type="ECO:0000305" key="4"/>
<protein>
    <recommendedName>
        <fullName evidence="1">Methionine aminopeptidase 1D, mitochondrial</fullName>
        <shortName evidence="1">MAP 1D</shortName>
        <shortName evidence="1">MetAP 1D</shortName>
        <ecNumber evidence="1">3.4.11.18</ecNumber>
    </recommendedName>
    <alternativeName>
        <fullName>Methionyl aminopeptidase type 1D, mitochondrial</fullName>
    </alternativeName>
    <alternativeName>
        <fullName evidence="1">Peptidase M 1D</fullName>
    </alternativeName>
</protein>
<dbReference type="EC" id="3.4.11.18" evidence="1"/>
<dbReference type="EMBL" id="AJ414378">
    <property type="protein sequence ID" value="CAC88860.1"/>
    <property type="molecule type" value="mRNA"/>
</dbReference>
<dbReference type="EMBL" id="AK005241">
    <property type="protein sequence ID" value="BAB23899.1"/>
    <property type="molecule type" value="mRNA"/>
</dbReference>
<dbReference type="EMBL" id="AK010067">
    <property type="protein sequence ID" value="BAB26680.1"/>
    <property type="molecule type" value="mRNA"/>
</dbReference>
<dbReference type="EMBL" id="AL928931">
    <property type="status" value="NOT_ANNOTATED_CDS"/>
    <property type="molecule type" value="Genomic_DNA"/>
</dbReference>
<dbReference type="EMBL" id="BC051534">
    <property type="protein sequence ID" value="AAH51534.1"/>
    <property type="molecule type" value="mRNA"/>
</dbReference>
<dbReference type="CCDS" id="CCDS16115.1">
    <molecule id="Q9CPW9-1"/>
</dbReference>
<dbReference type="RefSeq" id="NP_079909.1">
    <molecule id="Q9CPW9-1"/>
    <property type="nucleotide sequence ID" value="NM_025633.4"/>
</dbReference>
<dbReference type="RefSeq" id="XP_030107812.1">
    <molecule id="Q9CPW9-2"/>
    <property type="nucleotide sequence ID" value="XM_030251952.2"/>
</dbReference>
<dbReference type="SMR" id="Q9CPW9"/>
<dbReference type="FunCoup" id="Q9CPW9">
    <property type="interactions" value="473"/>
</dbReference>
<dbReference type="STRING" id="10090.ENSMUSP00000048190"/>
<dbReference type="MEROPS" id="M24.028"/>
<dbReference type="iPTMnet" id="Q9CPW9"/>
<dbReference type="PhosphoSitePlus" id="Q9CPW9"/>
<dbReference type="PaxDb" id="10090-ENSMUSP00000048190"/>
<dbReference type="PeptideAtlas" id="Q9CPW9"/>
<dbReference type="ProteomicsDB" id="252728">
    <molecule id="Q9CPW9-1"/>
</dbReference>
<dbReference type="ProteomicsDB" id="252729">
    <molecule id="Q9CPW9-2"/>
</dbReference>
<dbReference type="Pumba" id="Q9CPW9"/>
<dbReference type="Antibodypedia" id="33857">
    <property type="antibodies" value="113 antibodies from 19 providers"/>
</dbReference>
<dbReference type="DNASU" id="66559"/>
<dbReference type="Ensembl" id="ENSMUST00000037210.9">
    <molecule id="Q9CPW9-1"/>
    <property type="protein sequence ID" value="ENSMUSP00000048190.9"/>
    <property type="gene ID" value="ENSMUSG00000041921.17"/>
</dbReference>
<dbReference type="GeneID" id="66559"/>
<dbReference type="KEGG" id="mmu:66559"/>
<dbReference type="UCSC" id="uc008kas.1">
    <molecule id="Q9CPW9-1"/>
    <property type="organism name" value="mouse"/>
</dbReference>
<dbReference type="AGR" id="MGI:1913809"/>
<dbReference type="CTD" id="254042"/>
<dbReference type="MGI" id="MGI:1913809">
    <property type="gene designation" value="Metap1d"/>
</dbReference>
<dbReference type="VEuPathDB" id="HostDB:ENSMUSG00000041921"/>
<dbReference type="eggNOG" id="KOG2738">
    <property type="taxonomic scope" value="Eukaryota"/>
</dbReference>
<dbReference type="GeneTree" id="ENSGT00940000157735"/>
<dbReference type="HOGENOM" id="CLU_015857_1_1_1"/>
<dbReference type="InParanoid" id="Q9CPW9"/>
<dbReference type="OMA" id="RGAESCY"/>
<dbReference type="OrthoDB" id="3209743at2759"/>
<dbReference type="PhylomeDB" id="Q9CPW9"/>
<dbReference type="TreeFam" id="TF325318"/>
<dbReference type="BioGRID-ORCS" id="66559">
    <property type="hits" value="0 hits in 78 CRISPR screens"/>
</dbReference>
<dbReference type="ChiTaRS" id="Metap1d">
    <property type="organism name" value="mouse"/>
</dbReference>
<dbReference type="PRO" id="PR:Q9CPW9"/>
<dbReference type="Proteomes" id="UP000000589">
    <property type="component" value="Chromosome 2"/>
</dbReference>
<dbReference type="RNAct" id="Q9CPW9">
    <property type="molecule type" value="protein"/>
</dbReference>
<dbReference type="Bgee" id="ENSMUSG00000041921">
    <property type="expression patterns" value="Expressed in interventricular septum and 251 other cell types or tissues"/>
</dbReference>
<dbReference type="GO" id="GO:0005739">
    <property type="term" value="C:mitochondrion"/>
    <property type="evidence" value="ECO:0007005"/>
    <property type="project" value="MGI"/>
</dbReference>
<dbReference type="GO" id="GO:0004239">
    <property type="term" value="F:initiator methionyl aminopeptidase activity"/>
    <property type="evidence" value="ECO:0007669"/>
    <property type="project" value="UniProtKB-UniRule"/>
</dbReference>
<dbReference type="GO" id="GO:0046872">
    <property type="term" value="F:metal ion binding"/>
    <property type="evidence" value="ECO:0007669"/>
    <property type="project" value="UniProtKB-UniRule"/>
</dbReference>
<dbReference type="GO" id="GO:0070006">
    <property type="term" value="F:metalloaminopeptidase activity"/>
    <property type="evidence" value="ECO:0007669"/>
    <property type="project" value="UniProtKB-UniRule"/>
</dbReference>
<dbReference type="GO" id="GO:0043687">
    <property type="term" value="P:post-translational protein modification"/>
    <property type="evidence" value="ECO:0007669"/>
    <property type="project" value="Ensembl"/>
</dbReference>
<dbReference type="GO" id="GO:0006508">
    <property type="term" value="P:proteolysis"/>
    <property type="evidence" value="ECO:0007669"/>
    <property type="project" value="UniProtKB-KW"/>
</dbReference>
<dbReference type="CDD" id="cd01086">
    <property type="entry name" value="MetAP1"/>
    <property type="match status" value="1"/>
</dbReference>
<dbReference type="FunFam" id="3.90.230.10:FF:000011">
    <property type="entry name" value="Methionine aminopeptidase"/>
    <property type="match status" value="1"/>
</dbReference>
<dbReference type="Gene3D" id="3.90.230.10">
    <property type="entry name" value="Creatinase/methionine aminopeptidase superfamily"/>
    <property type="match status" value="1"/>
</dbReference>
<dbReference type="HAMAP" id="MF_01974">
    <property type="entry name" value="MetAP_1"/>
    <property type="match status" value="1"/>
</dbReference>
<dbReference type="InterPro" id="IPR036005">
    <property type="entry name" value="Creatinase/aminopeptidase-like"/>
</dbReference>
<dbReference type="InterPro" id="IPR000994">
    <property type="entry name" value="Pept_M24"/>
</dbReference>
<dbReference type="InterPro" id="IPR001714">
    <property type="entry name" value="Pept_M24_MAP"/>
</dbReference>
<dbReference type="InterPro" id="IPR002467">
    <property type="entry name" value="Pept_M24A_MAP1"/>
</dbReference>
<dbReference type="NCBIfam" id="TIGR00500">
    <property type="entry name" value="met_pdase_I"/>
    <property type="match status" value="1"/>
</dbReference>
<dbReference type="PANTHER" id="PTHR43330">
    <property type="entry name" value="METHIONINE AMINOPEPTIDASE"/>
    <property type="match status" value="1"/>
</dbReference>
<dbReference type="PANTHER" id="PTHR43330:SF8">
    <property type="entry name" value="METHIONINE AMINOPEPTIDASE 1D, MITOCHONDRIAL"/>
    <property type="match status" value="1"/>
</dbReference>
<dbReference type="Pfam" id="PF00557">
    <property type="entry name" value="Peptidase_M24"/>
    <property type="match status" value="1"/>
</dbReference>
<dbReference type="PRINTS" id="PR00599">
    <property type="entry name" value="MAPEPTIDASE"/>
</dbReference>
<dbReference type="SUPFAM" id="SSF55920">
    <property type="entry name" value="Creatinase/aminopeptidase"/>
    <property type="match status" value="1"/>
</dbReference>
<dbReference type="PROSITE" id="PS00680">
    <property type="entry name" value="MAP_1"/>
    <property type="match status" value="1"/>
</dbReference>